<reference key="1">
    <citation type="journal article" date="2001" name="Science">
        <title>Complete genome sequence of a virulent isolate of Streptococcus pneumoniae.</title>
        <authorList>
            <person name="Tettelin H."/>
            <person name="Nelson K.E."/>
            <person name="Paulsen I.T."/>
            <person name="Eisen J.A."/>
            <person name="Read T.D."/>
            <person name="Peterson S.N."/>
            <person name="Heidelberg J.F."/>
            <person name="DeBoy R.T."/>
            <person name="Haft D.H."/>
            <person name="Dodson R.J."/>
            <person name="Durkin A.S."/>
            <person name="Gwinn M.L."/>
            <person name="Kolonay J.F."/>
            <person name="Nelson W.C."/>
            <person name="Peterson J.D."/>
            <person name="Umayam L.A."/>
            <person name="White O."/>
            <person name="Salzberg S.L."/>
            <person name="Lewis M.R."/>
            <person name="Radune D."/>
            <person name="Holtzapple E.K."/>
            <person name="Khouri H.M."/>
            <person name="Wolf A.M."/>
            <person name="Utterback T.R."/>
            <person name="Hansen C.L."/>
            <person name="McDonald L.A."/>
            <person name="Feldblyum T.V."/>
            <person name="Angiuoli S.V."/>
            <person name="Dickinson T."/>
            <person name="Hickey E.K."/>
            <person name="Holt I.E."/>
            <person name="Loftus B.J."/>
            <person name="Yang F."/>
            <person name="Smith H.O."/>
            <person name="Venter J.C."/>
            <person name="Dougherty B.A."/>
            <person name="Morrison D.A."/>
            <person name="Hollingshead S.K."/>
            <person name="Fraser C.M."/>
        </authorList>
    </citation>
    <scope>NUCLEOTIDE SEQUENCE [LARGE SCALE GENOMIC DNA]</scope>
    <source>
        <strain>ATCC BAA-334 / TIGR4</strain>
    </source>
</reference>
<reference key="2">
    <citation type="journal article" date="2006" name="Infect. Immun.">
        <title>Identification of a candidate Streptococcus pneumoniae core genome and regions of diversity correlated with invasive pneumococcal disease.</title>
        <authorList>
            <person name="Obert C."/>
            <person name="Sublett J."/>
            <person name="Kaushal D."/>
            <person name="Hinojosa E."/>
            <person name="Barton T."/>
            <person name="Tuomanen E.I."/>
            <person name="Orihuela C.J."/>
        </authorList>
    </citation>
    <scope>DISCUSSION OF SEQUENCE</scope>
    <source>
        <strain>ATCC BAA-334 / TIGR4</strain>
    </source>
</reference>
<reference key="3">
    <citation type="journal article" date="2017" name="J. Biol. Chem.">
        <title>Defining the enzymatic pathway for polymorphic O-glycosylation of the pneumococcal serine-rich repeat protein PsrP.</title>
        <authorList>
            <person name="Jiang Y.L."/>
            <person name="Jin H."/>
            <person name="Yang H.B."/>
            <person name="Zhao R.L."/>
            <person name="Wang S."/>
            <person name="Chen Y."/>
            <person name="Zhou C.Z."/>
        </authorList>
    </citation>
    <scope>FUNCTION</scope>
    <scope>PATHWAY</scope>
    <scope>DOMAIN</scope>
    <scope>MUTAGENESIS OF ASP-572 AND GLU-789</scope>
    <source>
        <strain>ATCC BAA-334 / TIGR4</strain>
    </source>
</reference>
<keyword id="KW-0328">Glycosyltransferase</keyword>
<keyword id="KW-0464">Manganese</keyword>
<keyword id="KW-0479">Metal-binding</keyword>
<keyword id="KW-0547">Nucleotide-binding</keyword>
<keyword id="KW-1185">Reference proteome</keyword>
<keyword id="KW-0808">Transferase</keyword>
<name>GLYD_STRPN</name>
<proteinExistence type="evidence at protein level"/>
<accession>A0A0H2URB1</accession>
<comment type="function">
    <text evidence="2">Involved in the polymorphic O-glycosylation of the serine-rich repeat protein PsrP. Catalyzes the third step in glycosylation PsrP in this bacteria. Transfers glucose from UDP-glucose to the terminal glucose moiety of already-glycosylated PsrP (using truncated substrates with PsrP SSR1-GlcNAc-Glc); the C-terminal GT-D domain is sufficient for this reaction in vitro. Also transfers galactose from UDP-galactose to the terminal glucose moiety of already-glycosylated PsrP; the C-terminal GT-D domain is also sufficient for this reaction in vitro. Activity is much higher with UDP-glucose, and the enzyme has a very marked preference for PsrP substrate that has already been modified by GlcNAc and glucose. In vitro has hydrolytic activity against UDP-galactose and to a lesser extent against UDP-glucose.</text>
</comment>
<comment type="function">
    <text evidence="2">Also catalyzes the fourth step in glycosylation of PsrP in this bacteria. Can transfer the sugar from both UDP-glucose and UDP-galactose to the terminal sugar moiety of PsrP-GlcNAc-Glc-Glc and PsrP-GlcNAc-Glc-Gal; the C-terminal GT-D domain is also sufficient for this reaction in vitro (using truncated substrates with glycosylated PsrP SSR1). The N-terminal GT-D domain can transfer galactose from UDP-galactose to PsrP-GlcNAc-Glc-Gal or PsrP-GlcNAc-Glc-Glc in the fourth step.</text>
</comment>
<comment type="pathway">
    <text evidence="2">Protein modification; protein glycosylation.</text>
</comment>
<comment type="domain">
    <text evidence="2">Has an N-terminal GT8 domain and a C-terminal GT-D domain. The GT8 has very little glucose transferase activity in the third glycosylation step, but is able to transfer galactose from UDP-galactose to PsrP-GlcNAc-Glc-Gal or PsrP-GlcNAc-Glc-Glc in the fourth step. The C-terminal GT-D domain catalyzes transfer of galactose and glucose to the acceptor protein (PsrP-GlcNAc-Glc) in both the third and fourth glycosylation steps.</text>
</comment>
<comment type="miscellaneous">
    <text evidence="3 4 6">Encoded in RD10, a pathogenicity island with an atypical GC content that is associated with invasive pneumococcal disease. Pathogenicity islands account for greater than half the genomic diversity observed between isolates (PubMed:11463916, PubMed:16861665). The main function of this island seems to be correct synthesis and export of pneumococcal serine-rich repeat protein PsrP (Probable).</text>
</comment>
<comment type="similarity">
    <text evidence="7">In the N-terminal section; belongs to the glycosyltransferase 8 family.</text>
</comment>
<comment type="similarity">
    <text evidence="6">In the C-terminal section; belongs to the GT-D family.</text>
</comment>
<sequence>MNKTIVLAGDRNYTRQLETTIKSILYHNRDVKIYILNQDIMPDWFRKPRKIARMLGSEIIDVKLPEQTVFQDWEKQDHISSITYARYFIADYIQEDKVLYLDSDLIVNTSLEKLFSICLEEKSLAAVKDTDGITFNAGVLLINNKKWRQEKLKERLIEQSIVTMKEVEEGRFEHFNGDQTIFNQVLQDDWLELGRAYNLQVGHDIVALYNNWQEHLAFNDKPVVIHFTTYRKPWTTLTANRYRDLWWEFHDLEWSQILQHHMGEFELISPLDKEFSCLTLTNSQDLEGIEELVTALPEVVFHIAAWTDMGDKLKKLAVYNNVRLHPQIVPPVLDKLKKSTNLYLDINHGSADENFLKSLQEQEKTLLAFQSTQHGELGQIVFENGKVSFMIDTIKDFKKNGHLTCFRQLPSLTCLTFTASQYIEQLDYLAGQLPNVVFQIAAWTAMGPKLYDLSNRYPNIQLYPAISRDKLDELKEKMDAYLDINLLTSTSDIVAEMAHLSKPILAFYKSQNGNNGQRLYSSEHPERMLADLQKLITKDMLEKPLDIIQVKGIDETLDYIIEHNSSLVRFGDGEINMLAGHSIPYQDYDEELVSIMRDIIGQESREDLVVCLPDAFTDRFRFTSWAIPFWKDHMDHYMDFYRELCSDSWYGSTFVSRPYIDFEDKSQAKAQFEKLKSIWENRDLLIVEGATSRSGVGNDLFDEANSIKRIICPSHSAFSRVHELEQEIEKYAGGRLILCMLGPTAKVLSYNLCQMGYQVLDVGHIDSEYEWMKMGAKTKVKFSHKHTAEHNFDQDIEFIDDETYNSQIVARILN</sequence>
<gene>
    <name evidence="5" type="primary">glyD</name>
    <name type="ordered locus">SP_1767</name>
</gene>
<evidence type="ECO:0000250" key="1">
    <source>
        <dbReference type="UniProtKB" id="A0A0H2URJ6"/>
    </source>
</evidence>
<evidence type="ECO:0000269" key="2">
    <source>
    </source>
</evidence>
<evidence type="ECO:0000303" key="3">
    <source>
    </source>
</evidence>
<evidence type="ECO:0000303" key="4">
    <source>
    </source>
</evidence>
<evidence type="ECO:0000303" key="5">
    <source>
    </source>
</evidence>
<evidence type="ECO:0000305" key="6"/>
<evidence type="ECO:0000305" key="7">
    <source>
    </source>
</evidence>
<protein>
    <recommendedName>
        <fullName evidence="5">Glycosyltransferase GlyD</fullName>
    </recommendedName>
    <alternativeName>
        <fullName evidence="6">PsrP glycosyltransferase GlyD</fullName>
    </alternativeName>
</protein>
<organism>
    <name type="scientific">Streptococcus pneumoniae serotype 4 (strain ATCC BAA-334 / TIGR4)</name>
    <dbReference type="NCBI Taxonomy" id="170187"/>
    <lineage>
        <taxon>Bacteria</taxon>
        <taxon>Bacillati</taxon>
        <taxon>Bacillota</taxon>
        <taxon>Bacilli</taxon>
        <taxon>Lactobacillales</taxon>
        <taxon>Streptococcaceae</taxon>
        <taxon>Streptococcus</taxon>
    </lineage>
</organism>
<feature type="chain" id="PRO_0000447027" description="Glycosyltransferase GlyD">
    <location>
        <begin position="1"/>
        <end position="814"/>
    </location>
</feature>
<feature type="region of interest" description="GT8 domain" evidence="7">
    <location>
        <begin position="1"/>
        <end position="264"/>
    </location>
</feature>
<feature type="region of interest" description="GT-D domain" evidence="7">
    <location>
        <begin position="542"/>
        <end position="814"/>
    </location>
</feature>
<feature type="binding site" evidence="1">
    <location>
        <begin position="8"/>
        <end position="13"/>
    </location>
    <ligand>
        <name>UDP</name>
        <dbReference type="ChEBI" id="CHEBI:58223"/>
    </ligand>
</feature>
<feature type="binding site" evidence="1">
    <location>
        <begin position="102"/>
        <end position="103"/>
    </location>
    <ligand>
        <name>UDP</name>
        <dbReference type="ChEBI" id="CHEBI:58223"/>
    </ligand>
</feature>
<feature type="binding site" evidence="1">
    <location>
        <position position="102"/>
    </location>
    <ligand>
        <name>Mn(2+)</name>
        <dbReference type="ChEBI" id="CHEBI:29035"/>
    </ligand>
</feature>
<feature type="binding site" evidence="1">
    <location>
        <position position="104"/>
    </location>
    <ligand>
        <name>Mn(2+)</name>
        <dbReference type="ChEBI" id="CHEBI:29035"/>
    </ligand>
</feature>
<feature type="binding site" evidence="1">
    <location>
        <begin position="226"/>
        <end position="232"/>
    </location>
    <ligand>
        <name>UDP</name>
        <dbReference type="ChEBI" id="CHEBI:58223"/>
    </ligand>
</feature>
<feature type="binding site" evidence="1">
    <location>
        <position position="226"/>
    </location>
    <ligand>
        <name>Mn(2+)</name>
        <dbReference type="ChEBI" id="CHEBI:29035"/>
    </ligand>
</feature>
<feature type="mutagenesis site" description="Isolated GT-D domain no longer transfers glucose to an acceptor protein." evidence="2">
    <original>D</original>
    <variation>A</variation>
    <location>
        <position position="572"/>
    </location>
</feature>
<feature type="mutagenesis site" description="Isolated GT-D domain no longer transfers glucose to an acceptor protein." evidence="2">
    <original>E</original>
    <variation>A</variation>
    <location>
        <position position="789"/>
    </location>
</feature>
<dbReference type="EMBL" id="AE005672">
    <property type="protein sequence ID" value="AAK75842.1"/>
    <property type="molecule type" value="Genomic_DNA"/>
</dbReference>
<dbReference type="RefSeq" id="WP_001044136.1">
    <property type="nucleotide sequence ID" value="NC_003028.3"/>
</dbReference>
<dbReference type="SMR" id="A0A0H2URB1"/>
<dbReference type="PaxDb" id="170187-SP_1767"/>
<dbReference type="EnsemblBacteria" id="AAK75842">
    <property type="protein sequence ID" value="AAK75842"/>
    <property type="gene ID" value="SP_1767"/>
</dbReference>
<dbReference type="KEGG" id="spn:SP_1767"/>
<dbReference type="eggNOG" id="COG1442">
    <property type="taxonomic scope" value="Bacteria"/>
</dbReference>
<dbReference type="BioCyc" id="SPNE170187:G1FZB-1792-MONOMER"/>
<dbReference type="UniPathway" id="UPA00378"/>
<dbReference type="Proteomes" id="UP000000585">
    <property type="component" value="Chromosome"/>
</dbReference>
<dbReference type="GO" id="GO:0016757">
    <property type="term" value="F:glycosyltransferase activity"/>
    <property type="evidence" value="ECO:0007669"/>
    <property type="project" value="UniProtKB-KW"/>
</dbReference>
<dbReference type="GO" id="GO:0046872">
    <property type="term" value="F:metal ion binding"/>
    <property type="evidence" value="ECO:0007669"/>
    <property type="project" value="UniProtKB-KW"/>
</dbReference>
<dbReference type="GO" id="GO:0000166">
    <property type="term" value="F:nucleotide binding"/>
    <property type="evidence" value="ECO:0007669"/>
    <property type="project" value="UniProtKB-KW"/>
</dbReference>
<dbReference type="GO" id="GO:0006486">
    <property type="term" value="P:protein glycosylation"/>
    <property type="evidence" value="ECO:0007669"/>
    <property type="project" value="UniProtKB-UniPathway"/>
</dbReference>
<dbReference type="CDD" id="cd04194">
    <property type="entry name" value="GT8_A4GalT_like"/>
    <property type="match status" value="1"/>
</dbReference>
<dbReference type="Gene3D" id="3.90.550.10">
    <property type="entry name" value="Spore Coat Polysaccharide Biosynthesis Protein SpsA, Chain A"/>
    <property type="match status" value="1"/>
</dbReference>
<dbReference type="InterPro" id="IPR002495">
    <property type="entry name" value="Glyco_trans_8"/>
</dbReference>
<dbReference type="InterPro" id="IPR050748">
    <property type="entry name" value="Glycosyltrans_8_dom-fam"/>
</dbReference>
<dbReference type="InterPro" id="IPR014869">
    <property type="entry name" value="GT-D"/>
</dbReference>
<dbReference type="InterPro" id="IPR029044">
    <property type="entry name" value="Nucleotide-diphossugar_trans"/>
</dbReference>
<dbReference type="NCBIfam" id="TIGR03728">
    <property type="entry name" value="glyco_access_1"/>
    <property type="match status" value="1"/>
</dbReference>
<dbReference type="PANTHER" id="PTHR13778">
    <property type="entry name" value="GLYCOSYLTRANSFERASE 8 DOMAIN-CONTAINING PROTEIN"/>
    <property type="match status" value="1"/>
</dbReference>
<dbReference type="PANTHER" id="PTHR13778:SF47">
    <property type="entry name" value="LIPOPOLYSACCHARIDE 1,3-GALACTOSYLTRANSFERASE"/>
    <property type="match status" value="1"/>
</dbReference>
<dbReference type="Pfam" id="PF01501">
    <property type="entry name" value="Glyco_transf_8"/>
    <property type="match status" value="1"/>
</dbReference>
<dbReference type="Pfam" id="PF08759">
    <property type="entry name" value="GT-D"/>
    <property type="match status" value="1"/>
</dbReference>
<dbReference type="SUPFAM" id="SSF53448">
    <property type="entry name" value="Nucleotide-diphospho-sugar transferases"/>
    <property type="match status" value="1"/>
</dbReference>